<feature type="chain" id="PRO_0000280004" description="Glutathione transport system permease protein GsiD">
    <location>
        <begin position="1"/>
        <end position="303"/>
    </location>
</feature>
<feature type="transmembrane region" description="Helical" evidence="3">
    <location>
        <begin position="40"/>
        <end position="60"/>
    </location>
</feature>
<feature type="transmembrane region" description="Helical" evidence="3">
    <location>
        <begin position="105"/>
        <end position="125"/>
    </location>
</feature>
<feature type="transmembrane region" description="Helical" evidence="3">
    <location>
        <begin position="144"/>
        <end position="164"/>
    </location>
</feature>
<feature type="transmembrane region" description="Helical" evidence="3">
    <location>
        <begin position="165"/>
        <end position="185"/>
    </location>
</feature>
<feature type="transmembrane region" description="Helical" evidence="3">
    <location>
        <begin position="222"/>
        <end position="242"/>
    </location>
</feature>
<feature type="transmembrane region" description="Helical" evidence="3">
    <location>
        <begin position="266"/>
        <end position="286"/>
    </location>
</feature>
<feature type="domain" description="ABC transmembrane type-1" evidence="3">
    <location>
        <begin position="101"/>
        <end position="290"/>
    </location>
</feature>
<dbReference type="EMBL" id="CP000247">
    <property type="protein sequence ID" value="ABG68863.1"/>
    <property type="molecule type" value="Genomic_DNA"/>
</dbReference>
<dbReference type="RefSeq" id="WP_001236019.1">
    <property type="nucleotide sequence ID" value="NC_008253.1"/>
</dbReference>
<dbReference type="SMR" id="Q0TJL6"/>
<dbReference type="KEGG" id="ecp:ECP_0846"/>
<dbReference type="HOGENOM" id="CLU_028518_1_1_6"/>
<dbReference type="Proteomes" id="UP000009182">
    <property type="component" value="Chromosome"/>
</dbReference>
<dbReference type="GO" id="GO:0005886">
    <property type="term" value="C:plasma membrane"/>
    <property type="evidence" value="ECO:0007669"/>
    <property type="project" value="UniProtKB-SubCell"/>
</dbReference>
<dbReference type="GO" id="GO:0071916">
    <property type="term" value="F:dipeptide transmembrane transporter activity"/>
    <property type="evidence" value="ECO:0007669"/>
    <property type="project" value="TreeGrafter"/>
</dbReference>
<dbReference type="CDD" id="cd06261">
    <property type="entry name" value="TM_PBP2"/>
    <property type="match status" value="1"/>
</dbReference>
<dbReference type="FunFam" id="1.10.3720.10:FF:000022">
    <property type="entry name" value="Glutathione ABC transporter permease GsiD"/>
    <property type="match status" value="1"/>
</dbReference>
<dbReference type="Gene3D" id="1.10.3720.10">
    <property type="entry name" value="MetI-like"/>
    <property type="match status" value="1"/>
</dbReference>
<dbReference type="InterPro" id="IPR050366">
    <property type="entry name" value="BP-dependent_transpt_permease"/>
</dbReference>
<dbReference type="InterPro" id="IPR000515">
    <property type="entry name" value="MetI-like"/>
</dbReference>
<dbReference type="InterPro" id="IPR035906">
    <property type="entry name" value="MetI-like_sf"/>
</dbReference>
<dbReference type="InterPro" id="IPR025966">
    <property type="entry name" value="OppC_N"/>
</dbReference>
<dbReference type="NCBIfam" id="NF011662">
    <property type="entry name" value="PRK15082.1"/>
    <property type="match status" value="1"/>
</dbReference>
<dbReference type="PANTHER" id="PTHR43386:SF3">
    <property type="entry name" value="GLUTATHIONE TRANSPORT SYSTEM PERMEASE PROTEIN GSID"/>
    <property type="match status" value="1"/>
</dbReference>
<dbReference type="PANTHER" id="PTHR43386">
    <property type="entry name" value="OLIGOPEPTIDE TRANSPORT SYSTEM PERMEASE PROTEIN APPC"/>
    <property type="match status" value="1"/>
</dbReference>
<dbReference type="Pfam" id="PF00528">
    <property type="entry name" value="BPD_transp_1"/>
    <property type="match status" value="1"/>
</dbReference>
<dbReference type="Pfam" id="PF12911">
    <property type="entry name" value="OppC_N"/>
    <property type="match status" value="1"/>
</dbReference>
<dbReference type="SUPFAM" id="SSF161098">
    <property type="entry name" value="MetI-like"/>
    <property type="match status" value="1"/>
</dbReference>
<dbReference type="PROSITE" id="PS50928">
    <property type="entry name" value="ABC_TM1"/>
    <property type="match status" value="1"/>
</dbReference>
<comment type="function">
    <text evidence="1">Part of the ABC transporter complex GsiABCD involved in glutathione import. Probably responsible for the translocation of the substrate across the membrane.</text>
</comment>
<comment type="subunit">
    <text evidence="1">The complex is composed of two ATP-binding proteins (GsiA), two transmembrane proteins (GsiC and GsiD) and a solute-binding protein (GsiB).</text>
</comment>
<comment type="subcellular location">
    <subcellularLocation>
        <location evidence="1">Cell inner membrane</location>
        <topology evidence="2">Multi-pass membrane protein</topology>
    </subcellularLocation>
</comment>
<comment type="similarity">
    <text evidence="4">Belongs to the binding-protein-dependent transport system permease family.</text>
</comment>
<gene>
    <name evidence="1" type="primary">gsiD</name>
    <name type="ordered locus">ECP_0846</name>
</gene>
<keyword id="KW-0997">Cell inner membrane</keyword>
<keyword id="KW-1003">Cell membrane</keyword>
<keyword id="KW-0472">Membrane</keyword>
<keyword id="KW-0812">Transmembrane</keyword>
<keyword id="KW-1133">Transmembrane helix</keyword>
<keyword id="KW-0813">Transport</keyword>
<accession>Q0TJL6</accession>
<proteinExistence type="inferred from homology"/>
<reference key="1">
    <citation type="journal article" date="2006" name="Mol. Microbiol.">
        <title>Role of pathogenicity island-associated integrases in the genome plasticity of uropathogenic Escherichia coli strain 536.</title>
        <authorList>
            <person name="Hochhut B."/>
            <person name="Wilde C."/>
            <person name="Balling G."/>
            <person name="Middendorf B."/>
            <person name="Dobrindt U."/>
            <person name="Brzuszkiewicz E."/>
            <person name="Gottschalk G."/>
            <person name="Carniel E."/>
            <person name="Hacker J."/>
        </authorList>
    </citation>
    <scope>NUCLEOTIDE SEQUENCE [LARGE SCALE GENOMIC DNA]</scope>
    <source>
        <strain>536 / UPEC</strain>
    </source>
</reference>
<organism>
    <name type="scientific">Escherichia coli O6:K15:H31 (strain 536 / UPEC)</name>
    <dbReference type="NCBI Taxonomy" id="362663"/>
    <lineage>
        <taxon>Bacteria</taxon>
        <taxon>Pseudomonadati</taxon>
        <taxon>Pseudomonadota</taxon>
        <taxon>Gammaproteobacteria</taxon>
        <taxon>Enterobacterales</taxon>
        <taxon>Enterobacteriaceae</taxon>
        <taxon>Escherichia</taxon>
    </lineage>
</organism>
<protein>
    <recommendedName>
        <fullName evidence="1">Glutathione transport system permease protein GsiD</fullName>
    </recommendedName>
</protein>
<name>GSID_ECOL5</name>
<sequence>MRLFNWRRQAALNAMPLVKPDQVRTPWHEFWRRFRRQHMAMTAALFVILLIVVAIFARWIAPYDAENYFDYDNLNNGPSLQHWFGVDSLGRDIFSRVLVGAQISLAAGVFAVFIGAAIGTLLGLLAGYYEGWWDRLIMRICDVLFAFPGILLAIAVVAVLGSGIANVIIAVAIFSIPAFARLVRGNTLVLKQQTFIESARSIGASDMTILLRHILPGTVSSIVVFFTMRIGTSIISAASLSFLGLGAQPPTPEWGAMLNEARADMVIAPHVAVFPALAIFLTVLAFNLLGDGLRDALDPKIKG</sequence>
<evidence type="ECO:0000250" key="1">
    <source>
        <dbReference type="UniProtKB" id="P75799"/>
    </source>
</evidence>
<evidence type="ECO:0000255" key="2"/>
<evidence type="ECO:0000255" key="3">
    <source>
        <dbReference type="PROSITE-ProRule" id="PRU00441"/>
    </source>
</evidence>
<evidence type="ECO:0000305" key="4"/>